<proteinExistence type="evidence at protein level"/>
<sequence length="687" mass="76767">MDHTQQSRKAAEAQPSRSKQTRFCDGFKLFLAALSFSYICKALGGVVMKSSITQIERRFDIPSSISGLIDGGFEIGNLLVIVFVSYFGSKLHRPKLIGIGCFIMGIGSILTALPHFFMGYYKYAKENDIGSLGNSTLTCFINQMTSPTGPSPEIVEKGCEKGLKSHMWIYVLMGNMLRGIGETPIVPLGISYLDDFAKEGHTSMHLGTLHTIAMIGPILGFIMSSVFAKIYVDVGYVDLNSVRITPNDARWVGAWWLSFIVNGLLCITSSIPFFFLPKIPKRSQEERKNSVSLHAPKTDEEKKHMTNLTKQEEQDPSNMTGFLRSLRSILTNEIYVIFLILTLLQVSGFIGSFTYLFKFIEQQFGRTASQANFLLGIITIPTMATAMFLGGYIVKKFKLTSVGIAKFVFFTSSVAYAFQFLYFPLLCENKPFAGLTLTYDGMNPVDSHIDVPLSYCNSDCSCDKNQWEPICGENGVTYISPCLAGCKSFRGDKKPNNTEFYDCSCISNSGNNSAHLGECPRYKCKTNYYFYIILQVTVSFFTAMGSPSLILILMKSVQPELKSLAMGFHSLIIRALGGILAPIYYGAFIDRTCIKWSVTSCGKRGACRLYNSRLFGFSYLGLNLALKTPPLFLYVVLIYFTKRKYKRNDNKTLENGRQFTDEGNPDSVNKNGYYCVPYDEQSNETPL</sequence>
<gene>
    <name type="primary">Slco1b2</name>
    <name type="synonym">Oatp1b2</name>
    <name type="synonym">Slc21a10</name>
</gene>
<accession>Q9QZX8</accession>
<accession>Q9JHF6</accession>
<accession>Q9JIM2</accession>
<dbReference type="EMBL" id="AF147740">
    <property type="protein sequence ID" value="AAF02526.1"/>
    <property type="molecule type" value="mRNA"/>
</dbReference>
<dbReference type="EMBL" id="AF208545">
    <property type="protein sequence ID" value="AAF87098.1"/>
    <property type="molecule type" value="mRNA"/>
</dbReference>
<dbReference type="EMBL" id="AF217450">
    <property type="protein sequence ID" value="AAF87099.1"/>
    <property type="molecule type" value="mRNA"/>
</dbReference>
<dbReference type="EMBL" id="AF272571">
    <property type="protein sequence ID" value="AAF90136.1"/>
    <property type="molecule type" value="Genomic_DNA"/>
</dbReference>
<dbReference type="EMBL" id="AF272558">
    <property type="protein sequence ID" value="AAF90136.1"/>
    <property type="status" value="JOINED"/>
    <property type="molecule type" value="Genomic_DNA"/>
</dbReference>
<dbReference type="EMBL" id="AF272559">
    <property type="protein sequence ID" value="AAF90136.1"/>
    <property type="status" value="JOINED"/>
    <property type="molecule type" value="Genomic_DNA"/>
</dbReference>
<dbReference type="EMBL" id="AF272560">
    <property type="protein sequence ID" value="AAF90136.1"/>
    <property type="status" value="JOINED"/>
    <property type="molecule type" value="Genomic_DNA"/>
</dbReference>
<dbReference type="EMBL" id="AF272561">
    <property type="protein sequence ID" value="AAF90136.1"/>
    <property type="status" value="JOINED"/>
    <property type="molecule type" value="Genomic_DNA"/>
</dbReference>
<dbReference type="EMBL" id="AF272562">
    <property type="protein sequence ID" value="AAF90136.1"/>
    <property type="status" value="JOINED"/>
    <property type="molecule type" value="Genomic_DNA"/>
</dbReference>
<dbReference type="EMBL" id="AF272563">
    <property type="protein sequence ID" value="AAF90136.1"/>
    <property type="status" value="JOINED"/>
    <property type="molecule type" value="Genomic_DNA"/>
</dbReference>
<dbReference type="EMBL" id="AF272564">
    <property type="protein sequence ID" value="AAF90136.1"/>
    <property type="status" value="JOINED"/>
    <property type="molecule type" value="Genomic_DNA"/>
</dbReference>
<dbReference type="EMBL" id="AF272565">
    <property type="protein sequence ID" value="AAF90136.1"/>
    <property type="status" value="JOINED"/>
    <property type="molecule type" value="Genomic_DNA"/>
</dbReference>
<dbReference type="EMBL" id="AF272566">
    <property type="protein sequence ID" value="AAF90136.1"/>
    <property type="status" value="JOINED"/>
    <property type="molecule type" value="Genomic_DNA"/>
</dbReference>
<dbReference type="EMBL" id="AF272567">
    <property type="protein sequence ID" value="AAF90136.1"/>
    <property type="status" value="JOINED"/>
    <property type="molecule type" value="Genomic_DNA"/>
</dbReference>
<dbReference type="EMBL" id="AF272568">
    <property type="protein sequence ID" value="AAF90136.1"/>
    <property type="status" value="JOINED"/>
    <property type="molecule type" value="Genomic_DNA"/>
</dbReference>
<dbReference type="EMBL" id="AF272569">
    <property type="protein sequence ID" value="AAF90136.1"/>
    <property type="status" value="JOINED"/>
    <property type="molecule type" value="Genomic_DNA"/>
</dbReference>
<dbReference type="EMBL" id="AF272570">
    <property type="protein sequence ID" value="AAF90136.1"/>
    <property type="status" value="JOINED"/>
    <property type="molecule type" value="Genomic_DNA"/>
</dbReference>
<dbReference type="EMBL" id="AJ271682">
    <property type="protein sequence ID" value="CAB92299.1"/>
    <property type="molecule type" value="mRNA"/>
</dbReference>
<dbReference type="RefSeq" id="NP_001257515.1">
    <molecule id="Q9QZX8-1"/>
    <property type="nucleotide sequence ID" value="NM_001270586.1"/>
</dbReference>
<dbReference type="RefSeq" id="NP_001257516.1">
    <molecule id="Q9QZX8-3"/>
    <property type="nucleotide sequence ID" value="NM_001270587.1"/>
</dbReference>
<dbReference type="RefSeq" id="NP_113838.1">
    <molecule id="Q9QZX8-2"/>
    <property type="nucleotide sequence ID" value="NM_031650.3"/>
</dbReference>
<dbReference type="RefSeq" id="XP_038964228.1">
    <molecule id="Q9QZX8-2"/>
    <property type="nucleotide sequence ID" value="XM_039108300.2"/>
</dbReference>
<dbReference type="SMR" id="Q9QZX8"/>
<dbReference type="FunCoup" id="Q9QZX8">
    <property type="interactions" value="5"/>
</dbReference>
<dbReference type="IntAct" id="Q9QZX8">
    <property type="interactions" value="1"/>
</dbReference>
<dbReference type="STRING" id="10116.ENSRNOP00000013409"/>
<dbReference type="BindingDB" id="Q9QZX8"/>
<dbReference type="ChEMBL" id="CHEMBL1781861"/>
<dbReference type="TCDB" id="2.A.60.1.8">
    <property type="family name" value="the organo anion transporter (oat) family"/>
</dbReference>
<dbReference type="GlyCosmos" id="Q9QZX8">
    <property type="glycosylation" value="3 sites, No reported glycans"/>
</dbReference>
<dbReference type="GlyGen" id="Q9QZX8">
    <property type="glycosylation" value="3 sites"/>
</dbReference>
<dbReference type="iPTMnet" id="Q9QZX8"/>
<dbReference type="PhosphoSitePlus" id="Q9QZX8"/>
<dbReference type="PaxDb" id="10116-ENSRNOP00000013409"/>
<dbReference type="Ensembl" id="ENSRNOT00000013409.8">
    <molecule id="Q9QZX8-2"/>
    <property type="protein sequence ID" value="ENSRNOP00000013409.4"/>
    <property type="gene ID" value="ENSRNOG00000030538.6"/>
</dbReference>
<dbReference type="Ensembl" id="ENSRNOT00000013514.7">
    <molecule id="Q9QZX8-3"/>
    <property type="protein sequence ID" value="ENSRNOP00000013514.4"/>
    <property type="gene ID" value="ENSRNOG00000030538.6"/>
</dbReference>
<dbReference type="GeneID" id="58978"/>
<dbReference type="KEGG" id="rno:58978"/>
<dbReference type="UCSC" id="RGD:69300">
    <molecule id="Q9QZX8-2"/>
    <property type="organism name" value="rat"/>
</dbReference>
<dbReference type="AGR" id="RGD:69300"/>
<dbReference type="CTD" id="28253"/>
<dbReference type="RGD" id="69300">
    <property type="gene designation" value="Slco1b2"/>
</dbReference>
<dbReference type="eggNOG" id="KOG3626">
    <property type="taxonomic scope" value="Eukaryota"/>
</dbReference>
<dbReference type="GeneTree" id="ENSGT01130000278287"/>
<dbReference type="HOGENOM" id="CLU_008954_4_0_1"/>
<dbReference type="InParanoid" id="Q9QZX8"/>
<dbReference type="OMA" id="ECPRDSQ"/>
<dbReference type="OrthoDB" id="5062115at2759"/>
<dbReference type="PhylomeDB" id="Q9QZX8"/>
<dbReference type="TreeFam" id="TF317540"/>
<dbReference type="Reactome" id="R-RNO-159418">
    <property type="pathway name" value="Recycling of bile acids and salts"/>
</dbReference>
<dbReference type="Reactome" id="R-RNO-189483">
    <property type="pathway name" value="Heme degradation"/>
</dbReference>
<dbReference type="Reactome" id="R-RNO-879518">
    <property type="pathway name" value="Transport of organic anions"/>
</dbReference>
<dbReference type="Reactome" id="R-RNO-9754706">
    <property type="pathway name" value="Atorvastatin ADME"/>
</dbReference>
<dbReference type="PRO" id="PR:Q9QZX8"/>
<dbReference type="Proteomes" id="UP000002494">
    <property type="component" value="Chromosome 4"/>
</dbReference>
<dbReference type="Bgee" id="ENSRNOG00000030538">
    <property type="expression patterns" value="Expressed in liver and 9 other cell types or tissues"/>
</dbReference>
<dbReference type="GO" id="GO:0009925">
    <property type="term" value="C:basal plasma membrane"/>
    <property type="evidence" value="ECO:0000266"/>
    <property type="project" value="RGD"/>
</dbReference>
<dbReference type="GO" id="GO:0016323">
    <property type="term" value="C:basolateral plasma membrane"/>
    <property type="evidence" value="ECO:0000314"/>
    <property type="project" value="RGD"/>
</dbReference>
<dbReference type="GO" id="GO:0015125">
    <property type="term" value="F:bile acid transmembrane transporter activity"/>
    <property type="evidence" value="ECO:0000314"/>
    <property type="project" value="RGD"/>
</dbReference>
<dbReference type="GO" id="GO:0035673">
    <property type="term" value="F:oligopeptide transmembrane transporter activity"/>
    <property type="evidence" value="ECO:0000314"/>
    <property type="project" value="RGD"/>
</dbReference>
<dbReference type="GO" id="GO:0008514">
    <property type="term" value="F:organic anion transmembrane transporter activity"/>
    <property type="evidence" value="ECO:0000314"/>
    <property type="project" value="UniProtKB"/>
</dbReference>
<dbReference type="GO" id="GO:0015347">
    <property type="term" value="F:sodium-independent organic anion transmembrane transporter activity"/>
    <property type="evidence" value="ECO:0000318"/>
    <property type="project" value="GO_Central"/>
</dbReference>
<dbReference type="GO" id="GO:0015721">
    <property type="term" value="P:bile acid and bile salt transport"/>
    <property type="evidence" value="ECO:0000314"/>
    <property type="project" value="RGD"/>
</dbReference>
<dbReference type="GO" id="GO:0001889">
    <property type="term" value="P:liver development"/>
    <property type="evidence" value="ECO:0000270"/>
    <property type="project" value="RGD"/>
</dbReference>
<dbReference type="GO" id="GO:0006811">
    <property type="term" value="P:monoatomic ion transport"/>
    <property type="evidence" value="ECO:0007669"/>
    <property type="project" value="UniProtKB-KW"/>
</dbReference>
<dbReference type="GO" id="GO:0006857">
    <property type="term" value="P:oligopeptide transport"/>
    <property type="evidence" value="ECO:0000314"/>
    <property type="project" value="RGD"/>
</dbReference>
<dbReference type="GO" id="GO:0034097">
    <property type="term" value="P:response to cytokine"/>
    <property type="evidence" value="ECO:0000270"/>
    <property type="project" value="RGD"/>
</dbReference>
<dbReference type="GO" id="GO:0051384">
    <property type="term" value="P:response to glucocorticoid"/>
    <property type="evidence" value="ECO:0000270"/>
    <property type="project" value="RGD"/>
</dbReference>
<dbReference type="GO" id="GO:0033993">
    <property type="term" value="P:response to lipid"/>
    <property type="evidence" value="ECO:0000270"/>
    <property type="project" value="RGD"/>
</dbReference>
<dbReference type="GO" id="GO:0032496">
    <property type="term" value="P:response to lipopolysaccharide"/>
    <property type="evidence" value="ECO:0000270"/>
    <property type="project" value="RGD"/>
</dbReference>
<dbReference type="GO" id="GO:0043434">
    <property type="term" value="P:response to peptide hormone"/>
    <property type="evidence" value="ECO:0000270"/>
    <property type="project" value="RGD"/>
</dbReference>
<dbReference type="GO" id="GO:0009410">
    <property type="term" value="P:response to xenobiotic stimulus"/>
    <property type="evidence" value="ECO:0000270"/>
    <property type="project" value="RGD"/>
</dbReference>
<dbReference type="GO" id="GO:0043252">
    <property type="term" value="P:sodium-independent organic anion transport"/>
    <property type="evidence" value="ECO:0000318"/>
    <property type="project" value="GO_Central"/>
</dbReference>
<dbReference type="Gene3D" id="1.20.1250.20">
    <property type="entry name" value="MFS general substrate transporter like domains"/>
    <property type="match status" value="1"/>
</dbReference>
<dbReference type="InterPro" id="IPR002350">
    <property type="entry name" value="Kazal_dom"/>
</dbReference>
<dbReference type="InterPro" id="IPR036058">
    <property type="entry name" value="Kazal_dom_sf"/>
</dbReference>
<dbReference type="InterPro" id="IPR020846">
    <property type="entry name" value="MFS_dom"/>
</dbReference>
<dbReference type="InterPro" id="IPR036259">
    <property type="entry name" value="MFS_trans_sf"/>
</dbReference>
<dbReference type="InterPro" id="IPR004156">
    <property type="entry name" value="OATP"/>
</dbReference>
<dbReference type="NCBIfam" id="TIGR00805">
    <property type="entry name" value="oat"/>
    <property type="match status" value="1"/>
</dbReference>
<dbReference type="PANTHER" id="PTHR11388">
    <property type="entry name" value="ORGANIC ANION TRANSPORTER"/>
    <property type="match status" value="1"/>
</dbReference>
<dbReference type="PANTHER" id="PTHR11388:SF89">
    <property type="entry name" value="SOLUTE CARRIER ORGANIC ANION TRANSPORTER FAMILY MEMBER 1B3"/>
    <property type="match status" value="1"/>
</dbReference>
<dbReference type="Pfam" id="PF07648">
    <property type="entry name" value="Kazal_2"/>
    <property type="match status" value="1"/>
</dbReference>
<dbReference type="Pfam" id="PF03137">
    <property type="entry name" value="OATP"/>
    <property type="match status" value="1"/>
</dbReference>
<dbReference type="SUPFAM" id="SSF100895">
    <property type="entry name" value="Kazal-type serine protease inhibitors"/>
    <property type="match status" value="1"/>
</dbReference>
<dbReference type="SUPFAM" id="SSF103473">
    <property type="entry name" value="MFS general substrate transporter"/>
    <property type="match status" value="1"/>
</dbReference>
<dbReference type="PROSITE" id="PS51465">
    <property type="entry name" value="KAZAL_2"/>
    <property type="match status" value="1"/>
</dbReference>
<dbReference type="PROSITE" id="PS50850">
    <property type="entry name" value="MFS"/>
    <property type="match status" value="1"/>
</dbReference>
<feature type="chain" id="PRO_0000191052" description="Solute carrier organic anion transporter family member 1B2">
    <location>
        <begin position="1"/>
        <end position="687"/>
    </location>
</feature>
<feature type="topological domain" description="Cytoplasmic" evidence="2">
    <location>
        <begin position="1"/>
        <end position="28"/>
    </location>
</feature>
<feature type="transmembrane region" description="Helical" evidence="2">
    <location>
        <begin position="29"/>
        <end position="48"/>
    </location>
</feature>
<feature type="topological domain" description="Extracellular" evidence="2">
    <location>
        <begin position="49"/>
        <end position="67"/>
    </location>
</feature>
<feature type="transmembrane region" description="Helical" evidence="2">
    <location>
        <begin position="68"/>
        <end position="88"/>
    </location>
</feature>
<feature type="topological domain" description="Cytoplasmic" evidence="2">
    <location>
        <begin position="89"/>
        <end position="94"/>
    </location>
</feature>
<feature type="transmembrane region" description="Helical" evidence="2">
    <location>
        <begin position="95"/>
        <end position="119"/>
    </location>
</feature>
<feature type="topological domain" description="Extracellular" evidence="2">
    <location>
        <begin position="120"/>
        <end position="165"/>
    </location>
</feature>
<feature type="transmembrane region" description="Helical" evidence="2">
    <location>
        <begin position="166"/>
        <end position="194"/>
    </location>
</feature>
<feature type="topological domain" description="Cytoplasmic" evidence="2">
    <location>
        <begin position="195"/>
        <end position="213"/>
    </location>
</feature>
<feature type="transmembrane region" description="Helical" evidence="2">
    <location>
        <begin position="214"/>
        <end position="234"/>
    </location>
</feature>
<feature type="topological domain" description="Extracellular" evidence="2">
    <location>
        <begin position="235"/>
        <end position="252"/>
    </location>
</feature>
<feature type="transmembrane region" description="Helical" evidence="2">
    <location>
        <begin position="253"/>
        <end position="277"/>
    </location>
</feature>
<feature type="topological domain" description="Cytoplasmic" evidence="2">
    <location>
        <begin position="278"/>
        <end position="328"/>
    </location>
</feature>
<feature type="transmembrane region" description="Helical" evidence="2">
    <location>
        <begin position="329"/>
        <end position="350"/>
    </location>
</feature>
<feature type="topological domain" description="Extracellular" evidence="2">
    <location>
        <begin position="351"/>
        <end position="370"/>
    </location>
</feature>
<feature type="transmembrane region" description="Helical" evidence="2">
    <location>
        <begin position="371"/>
        <end position="394"/>
    </location>
</feature>
<feature type="topological domain" description="Cytoplasmic" evidence="2">
    <location>
        <begin position="395"/>
        <end position="398"/>
    </location>
</feature>
<feature type="transmembrane region" description="Helical" evidence="2">
    <location>
        <begin position="399"/>
        <end position="422"/>
    </location>
</feature>
<feature type="topological domain" description="Extracellular" evidence="2">
    <location>
        <begin position="423"/>
        <end position="531"/>
    </location>
</feature>
<feature type="transmembrane region" description="Helical" evidence="2">
    <location>
        <begin position="532"/>
        <end position="554"/>
    </location>
</feature>
<feature type="topological domain" description="Cytoplasmic" evidence="2">
    <location>
        <begin position="555"/>
        <end position="563"/>
    </location>
</feature>
<feature type="transmembrane region" description="Helical" evidence="2">
    <location>
        <begin position="564"/>
        <end position="589"/>
    </location>
</feature>
<feature type="topological domain" description="Extracellular" evidence="2">
    <location>
        <begin position="590"/>
        <end position="623"/>
    </location>
</feature>
<feature type="transmembrane region" description="Helical" evidence="2">
    <location>
        <begin position="624"/>
        <end position="641"/>
    </location>
</feature>
<feature type="topological domain" description="Cytoplasmic" evidence="2">
    <location>
        <begin position="642"/>
        <end position="687"/>
    </location>
</feature>
<feature type="domain" description="Kazal-like" evidence="3">
    <location>
        <begin position="450"/>
        <end position="507"/>
    </location>
</feature>
<feature type="region of interest" description="Disordered" evidence="4">
    <location>
        <begin position="286"/>
        <end position="311"/>
    </location>
</feature>
<feature type="modified residue" description="Phosphoserine" evidence="10">
    <location>
        <position position="290"/>
    </location>
</feature>
<feature type="modified residue" description="Phosphoserine" evidence="1">
    <location>
        <position position="292"/>
    </location>
</feature>
<feature type="modified residue" description="Phosphothreonine" evidence="10">
    <location>
        <position position="660"/>
    </location>
</feature>
<feature type="modified residue" description="Phosphoserine" evidence="10">
    <location>
        <position position="667"/>
    </location>
</feature>
<feature type="glycosylation site" description="N-linked (GlcNAc...) asparagine" evidence="2">
    <location>
        <position position="134"/>
    </location>
</feature>
<feature type="glycosylation site" description="N-linked (GlcNAc...) asparagine" evidence="2">
    <location>
        <position position="496"/>
    </location>
</feature>
<feature type="glycosylation site" description="N-linked (GlcNAc...) asparagine" evidence="2">
    <location>
        <position position="511"/>
    </location>
</feature>
<feature type="disulfide bond" evidence="3">
    <location>
        <begin position="456"/>
        <end position="486"/>
    </location>
</feature>
<feature type="disulfide bond" evidence="3">
    <location>
        <begin position="462"/>
        <end position="482"/>
    </location>
</feature>
<feature type="disulfide bond" evidence="3">
    <location>
        <begin position="471"/>
        <end position="505"/>
    </location>
</feature>
<feature type="splice variant" id="VSP_006151" description="In isoform 3." evidence="7">
    <original>GTLHTIAMIGPILGFIMSSVFAKIYVDVGYVDLN</original>
    <variation>D</variation>
    <location>
        <begin position="207"/>
        <end position="240"/>
    </location>
</feature>
<feature type="splice variant" id="VSP_006150" description="In isoform 2." evidence="6">
    <location>
        <begin position="407"/>
        <end position="441"/>
    </location>
</feature>
<protein>
    <recommendedName>
        <fullName>Solute carrier organic anion transporter family member 1B2</fullName>
    </recommendedName>
    <alternativeName>
        <fullName>Liver-specific organic anion transporter 1</fullName>
        <shortName>rLST-1</shortName>
    </alternativeName>
    <alternativeName>
        <fullName>Sodium-independent organic anion-transporting polypeptide 4</fullName>
        <shortName>OATP-4</shortName>
    </alternativeName>
    <alternativeName>
        <fullName>Solute carrier family 21 member 10</fullName>
    </alternativeName>
</protein>
<keyword id="KW-0025">Alternative splicing</keyword>
<keyword id="KW-1003">Cell membrane</keyword>
<keyword id="KW-1015">Disulfide bond</keyword>
<keyword id="KW-0325">Glycoprotein</keyword>
<keyword id="KW-0406">Ion transport</keyword>
<keyword id="KW-0472">Membrane</keyword>
<keyword id="KW-0597">Phosphoprotein</keyword>
<keyword id="KW-1185">Reference proteome</keyword>
<keyword id="KW-0812">Transmembrane</keyword>
<keyword id="KW-1133">Transmembrane helix</keyword>
<keyword id="KW-0813">Transport</keyword>
<comment type="function">
    <text evidence="5">Mediates the Na(+)-independent uptake of organic anions such as taurochlate, bromosulfophthalein and steroid conjugates (estrone 3-sulfate, 17-beta-glucuronosyl estradiol, dehydroepiandrosterone sulfate) (PubMed:19129463). Also transports prostaglandin E2 and L-thyroxine (T4) (PubMed:19129463). Shows a pH-sensitive substrate specificity which may be ascribed to the protonation state of the binding site and leads to a stimulation of substrate transport in an acidic microenvironment (PubMed:19129463). Hydrogencarbonate/HCO3(-) acts as the probable counteranion that exchanges for organic anions (PubMed:19129463).</text>
</comment>
<comment type="catalytic activity">
    <reaction evidence="9">
        <text>estrone 3-sulfate(out) = estrone 3-sulfate(in)</text>
        <dbReference type="Rhea" id="RHEA:71835"/>
        <dbReference type="ChEBI" id="CHEBI:60050"/>
    </reaction>
</comment>
<comment type="catalytic activity">
    <reaction evidence="9">
        <text>taurocholate(out) = taurocholate(in)</text>
        <dbReference type="Rhea" id="RHEA:71703"/>
        <dbReference type="ChEBI" id="CHEBI:36257"/>
    </reaction>
</comment>
<comment type="catalytic activity">
    <reaction evidence="9">
        <text>prostaglandin E2(out) = prostaglandin E2(in)</text>
        <dbReference type="Rhea" id="RHEA:50984"/>
        <dbReference type="ChEBI" id="CHEBI:606564"/>
    </reaction>
</comment>
<comment type="catalytic activity">
    <reaction evidence="9">
        <text>L-thyroxine(out) = L-thyroxine(in)</text>
        <dbReference type="Rhea" id="RHEA:71819"/>
        <dbReference type="ChEBI" id="CHEBI:58448"/>
    </reaction>
</comment>
<comment type="biophysicochemical properties">
    <kinetics>
        <KM evidence="5">56.1 uM for estrone 3-sulfate (at pH 6.5)</KM>
        <KM evidence="5">91.7 uM for estrone 3-sulfate (at pH 8.0)</KM>
        <KM evidence="5">22.3 uM for taurocholate (at pH 6.5)</KM>
        <KM evidence="5">41.1 uM for taurocholate (at pH 8.0)</KM>
        <KM evidence="5">9.57 uM for prostaglandin E2 (at pH 6.5)</KM>
        <KM evidence="5">20 uM for prostaglandin E2 (at pH 8.0)</KM>
        <Vmax evidence="5">2164.0 pmol/min/mg enzyme with estrone 3-sulfate as substrate (at pH 6.5)</Vmax>
        <Vmax evidence="5">2332.0 pmol/min/mg enzyme with estrone 3-sulfate as substrate (at pH 8.0)</Vmax>
        <Vmax evidence="5">407.0 pmol/min/mg enzyme with taurocholate as substrate (at pH 6.5)</Vmax>
        <Vmax evidence="5">475.0 pmol/min/mg enzyme with taurocholate as substrate (at pH 8.0)</Vmax>
        <Vmax evidence="5">230.0 pmol/min/mg enzyme with prostaglandin E2 as substrate (at pH 6.5)</Vmax>
        <Vmax evidence="5">205.0 pmol/min/mg enzyme with prostaglandin E2 as substrate (at pH 8.0)</Vmax>
    </kinetics>
    <phDependence>
        <text evidence="5">Optimum pH is 6.5 with estrone 3-sulfate, taurocholate and prostaglandin E2 as substrates.</text>
    </phDependence>
</comment>
<comment type="subcellular location">
    <subcellularLocation>
        <location>Basolateral cell membrane</location>
        <topology>Multi-pass membrane protein</topology>
    </subcellularLocation>
    <text>Confined to the basolateral plasma membrane of hepatocytes.</text>
</comment>
<comment type="alternative products">
    <event type="alternative splicing"/>
    <isoform>
        <id>Q9QZX8-2</id>
        <name>1</name>
        <name>rLST-1a</name>
        <sequence type="displayed"/>
    </isoform>
    <isoform>
        <id>Q9QZX8-1</id>
        <name>2</name>
        <name>rLST-1b</name>
        <sequence type="described" ref="VSP_006150"/>
    </isoform>
    <isoform>
        <id>Q9QZX8-3</id>
        <name>3</name>
        <name>rLST-1c</name>
        <sequence type="described" ref="VSP_006151"/>
    </isoform>
</comment>
<comment type="tissue specificity">
    <text>Liver specific. Expression is highest in central perivenous hepatocytes and lowest in the periportal region. Isoform 1 predominates. Not detected in heart, brain, kidney, skeletal muscle, lung, testis or spleen.</text>
</comment>
<comment type="domain">
    <text evidence="9">A conserved histidine residue in the third TMD (His-115) may play an essential role in the pH sensitivity of SLCO1B2/OATP1B2-mediated substrate transport.</text>
</comment>
<comment type="similarity">
    <text evidence="8">Belongs to the organo anion transporter (TC 2.A.60) family.</text>
</comment>
<organism>
    <name type="scientific">Rattus norvegicus</name>
    <name type="common">Rat</name>
    <dbReference type="NCBI Taxonomy" id="10116"/>
    <lineage>
        <taxon>Eukaryota</taxon>
        <taxon>Metazoa</taxon>
        <taxon>Chordata</taxon>
        <taxon>Craniata</taxon>
        <taxon>Vertebrata</taxon>
        <taxon>Euteleostomi</taxon>
        <taxon>Mammalia</taxon>
        <taxon>Eutheria</taxon>
        <taxon>Euarchontoglires</taxon>
        <taxon>Glires</taxon>
        <taxon>Rodentia</taxon>
        <taxon>Myomorpha</taxon>
        <taxon>Muroidea</taxon>
        <taxon>Muridae</taxon>
        <taxon>Murinae</taxon>
        <taxon>Rattus</taxon>
    </lineage>
</organism>
<reference key="1">
    <citation type="journal article" date="1999" name="Gastroenterology">
        <title>Molecular characterization and functional regulation of a novel rat liver-specific organic anion transporter rlst-1.</title>
        <authorList>
            <person name="Kakyo M."/>
            <person name="Unno M."/>
            <person name="Tokui T."/>
            <person name="Nakagomi R."/>
            <person name="Nishio T."/>
            <person name="Iwasashi H."/>
            <person name="Nakai D."/>
            <person name="Seki M."/>
            <person name="Suzuki M."/>
            <person name="Naitoh T."/>
            <person name="Matsuno S."/>
            <person name="Yawo H."/>
            <person name="Abe T."/>
        </authorList>
    </citation>
    <scope>NUCLEOTIDE SEQUENCE [MRNA] (ISOFORM 2)</scope>
    <source>
        <tissue>Liver</tissue>
    </source>
</reference>
<reference key="2">
    <citation type="journal article" date="2000" name="Biochem. Biophys. Res. Commun.">
        <title>Cloning of the full-length coding sequence of rat liver-specific organic anion transporter-1 (rlst-1) and a splice variant and partial characterization of the rat lst-1 gene.</title>
        <authorList>
            <person name="Choudhuri S."/>
            <person name="Ogura K."/>
            <person name="Klaassen C.D."/>
        </authorList>
    </citation>
    <scope>NUCLEOTIDE SEQUENCE [GENOMIC DNA / MRNA] (ISOFORMS 1 AND 3)</scope>
    <source>
        <strain>Sprague-Dawley</strain>
        <tissue>Liver</tissue>
    </source>
</reference>
<reference key="3">
    <citation type="journal article" date="2000" name="FEBS Lett.">
        <title>Identification of organic anion transporting polypeptide 4 (Oatp4) as a major full-length isoform of the liver-specific transporter-1 (rlst-1) in rat liver.</title>
        <authorList>
            <person name="Cattori V."/>
            <person name="Hagenbuch B."/>
            <person name="Hagenbuch N."/>
            <person name="Stieger B."/>
            <person name="Ha R."/>
            <person name="Winterhalter K.H."/>
            <person name="Meier P.J."/>
        </authorList>
    </citation>
    <scope>NUCLEOTIDE SEQUENCE [MRNA] (ISOFORM 1)</scope>
    <source>
        <strain>Sprague-Dawley</strain>
        <tissue>Liver</tissue>
    </source>
</reference>
<reference key="4">
    <citation type="journal article" date="2001" name="Pflugers Arch.">
        <title>Localization of organic anion transporting polypeptide 4 (Oatp4) in rat liver and comparison of its substrate specificity with Oatp1, Oatp2 and Oatp3.</title>
        <authorList>
            <person name="Cattori V."/>
            <person name="van Montfoort J.E."/>
            <person name="Stieger B."/>
            <person name="Landmann L."/>
            <person name="Meijer D.K."/>
            <person name="Winterhalter K.H."/>
            <person name="Meier P.J."/>
            <person name="Hagenbuch B."/>
        </authorList>
    </citation>
    <scope>CHARACTERIZATION</scope>
</reference>
<reference key="5">
    <citation type="journal article" date="2006" name="J. Proteome Res.">
        <title>Phosphoproteomic analysis of rat liver by high capacity IMAC and LC-MS/MS.</title>
        <authorList>
            <person name="Moser K."/>
            <person name="White F.M."/>
        </authorList>
    </citation>
    <scope>IDENTIFICATION BY MASS SPECTROMETRY [LARGE SCALE ANALYSIS]</scope>
</reference>
<reference key="6">
    <citation type="journal article" date="2009" name="Am. J. Physiol.">
        <title>Mechanisms of pH-gradient driven transport mediated by organic anion polypeptide transporters.</title>
        <authorList>
            <person name="Leuthold S."/>
            <person name="Hagenbuch B."/>
            <person name="Mohebbi N."/>
            <person name="Wagner C.A."/>
            <person name="Meier P.J."/>
            <person name="Stieger B."/>
        </authorList>
    </citation>
    <scope>FUNCTION</scope>
    <scope>TRANSPORTER ACTIVITY</scope>
    <scope>BIOPHYSICOCHEMICAL PROPERTIES</scope>
    <scope>DOMAIN</scope>
</reference>
<reference key="7">
    <citation type="journal article" date="2012" name="Nat. Commun.">
        <title>Quantitative maps of protein phosphorylation sites across 14 different rat organs and tissues.</title>
        <authorList>
            <person name="Lundby A."/>
            <person name="Secher A."/>
            <person name="Lage K."/>
            <person name="Nordsborg N.B."/>
            <person name="Dmytriyev A."/>
            <person name="Lundby C."/>
            <person name="Olsen J.V."/>
        </authorList>
    </citation>
    <scope>PHOSPHORYLATION [LARGE SCALE ANALYSIS] AT SER-290; THR-660 AND SER-667</scope>
    <scope>IDENTIFICATION BY MASS SPECTROMETRY [LARGE SCALE ANALYSIS]</scope>
</reference>
<evidence type="ECO:0000250" key="1">
    <source>
        <dbReference type="UniProtKB" id="Q9JJL3"/>
    </source>
</evidence>
<evidence type="ECO:0000255" key="2"/>
<evidence type="ECO:0000255" key="3">
    <source>
        <dbReference type="PROSITE-ProRule" id="PRU00798"/>
    </source>
</evidence>
<evidence type="ECO:0000256" key="4">
    <source>
        <dbReference type="SAM" id="MobiDB-lite"/>
    </source>
</evidence>
<evidence type="ECO:0000269" key="5">
    <source>
    </source>
</evidence>
<evidence type="ECO:0000303" key="6">
    <source>
    </source>
</evidence>
<evidence type="ECO:0000303" key="7">
    <source>
    </source>
</evidence>
<evidence type="ECO:0000305" key="8"/>
<evidence type="ECO:0000305" key="9">
    <source>
    </source>
</evidence>
<evidence type="ECO:0007744" key="10">
    <source>
    </source>
</evidence>
<name>SO1B2_RAT</name>